<sequence length="138" mass="16180">MADDDDYQDMDNDDFVDDNEMEDVIEEEQQRPDHEEEDDDNNVDENFELFDQGKAVPTSEHVTTPFMTKYERARVLGTRALQIAMGAPVMVELEGETDPLEIARKELKQRRVPIIIRRYLPDGSYEDWPTEQLQLADW</sequence>
<reference evidence="5" key="1">
    <citation type="journal article" date="2003" name="PLoS Biol.">
        <title>The genome sequence of Caenorhabditis briggsae: a platform for comparative genomics.</title>
        <authorList>
            <person name="Stein L.D."/>
            <person name="Bao Z."/>
            <person name="Blasiar D."/>
            <person name="Blumenthal T."/>
            <person name="Brent M.R."/>
            <person name="Chen N."/>
            <person name="Chinwalla A."/>
            <person name="Clarke L."/>
            <person name="Clee C."/>
            <person name="Coghlan A."/>
            <person name="Coulson A."/>
            <person name="D'Eustachio P."/>
            <person name="Fitch D.H.A."/>
            <person name="Fulton L.A."/>
            <person name="Fulton R.E."/>
            <person name="Griffiths-Jones S."/>
            <person name="Harris T.W."/>
            <person name="Hillier L.W."/>
            <person name="Kamath R."/>
            <person name="Kuwabara P.E."/>
            <person name="Mardis E.R."/>
            <person name="Marra M.A."/>
            <person name="Miner T.L."/>
            <person name="Minx P."/>
            <person name="Mullikin J.C."/>
            <person name="Plumb R.W."/>
            <person name="Rogers J."/>
            <person name="Schein J.E."/>
            <person name="Sohrmann M."/>
            <person name="Spieth J."/>
            <person name="Stajich J.E."/>
            <person name="Wei C."/>
            <person name="Willey D."/>
            <person name="Wilson R.K."/>
            <person name="Durbin R.M."/>
            <person name="Waterston R.H."/>
        </authorList>
    </citation>
    <scope>NUCLEOTIDE SEQUENCE [LARGE SCALE GENOMIC DNA]</scope>
    <source>
        <strain evidence="5">AF16</strain>
    </source>
</reference>
<name>RPAB2_CAEBR</name>
<keyword id="KW-0240">DNA-directed RNA polymerase</keyword>
<keyword id="KW-0539">Nucleus</keyword>
<keyword id="KW-1185">Reference proteome</keyword>
<keyword id="KW-0804">Transcription</keyword>
<proteinExistence type="inferred from homology"/>
<dbReference type="EMBL" id="HE601438">
    <property type="protein sequence ID" value="CAP23566.1"/>
    <property type="molecule type" value="Genomic_DNA"/>
</dbReference>
<dbReference type="SMR" id="A8WSV7"/>
<dbReference type="FunCoup" id="A8WSV7">
    <property type="interactions" value="1868"/>
</dbReference>
<dbReference type="STRING" id="6238.A8WSV7"/>
<dbReference type="EnsemblMetazoa" id="CBG03063.1">
    <property type="protein sequence ID" value="CBG03063.1"/>
    <property type="gene ID" value="WBGene00026003"/>
</dbReference>
<dbReference type="KEGG" id="cbr:CBG_03063"/>
<dbReference type="CTD" id="8572774"/>
<dbReference type="WormBase" id="CBG03063">
    <property type="protein sequence ID" value="CBP14655"/>
    <property type="gene ID" value="WBGene00026003"/>
    <property type="gene designation" value="Cbr-rpb-6"/>
</dbReference>
<dbReference type="eggNOG" id="KOG3405">
    <property type="taxonomic scope" value="Eukaryota"/>
</dbReference>
<dbReference type="HOGENOM" id="CLU_112527_0_1_1"/>
<dbReference type="InParanoid" id="A8WSV7"/>
<dbReference type="OMA" id="EDWPTEQ"/>
<dbReference type="OrthoDB" id="259769at2759"/>
<dbReference type="Proteomes" id="UP000008549">
    <property type="component" value="Unassembled WGS sequence"/>
</dbReference>
<dbReference type="GO" id="GO:0005736">
    <property type="term" value="C:RNA polymerase I complex"/>
    <property type="evidence" value="ECO:0000318"/>
    <property type="project" value="GO_Central"/>
</dbReference>
<dbReference type="GO" id="GO:0005665">
    <property type="term" value="C:RNA polymerase II, core complex"/>
    <property type="evidence" value="ECO:0000318"/>
    <property type="project" value="GO_Central"/>
</dbReference>
<dbReference type="GO" id="GO:0005666">
    <property type="term" value="C:RNA polymerase III complex"/>
    <property type="evidence" value="ECO:0000318"/>
    <property type="project" value="GO_Central"/>
</dbReference>
<dbReference type="GO" id="GO:0003677">
    <property type="term" value="F:DNA binding"/>
    <property type="evidence" value="ECO:0007669"/>
    <property type="project" value="InterPro"/>
</dbReference>
<dbReference type="GO" id="GO:0003899">
    <property type="term" value="F:DNA-directed RNA polymerase activity"/>
    <property type="evidence" value="ECO:0007669"/>
    <property type="project" value="InterPro"/>
</dbReference>
<dbReference type="GO" id="GO:0110044">
    <property type="term" value="P:regulation of cell cycle switching, mitotic to meiotic cell cycle"/>
    <property type="evidence" value="ECO:0000250"/>
    <property type="project" value="UniProtKB"/>
</dbReference>
<dbReference type="GO" id="GO:0006360">
    <property type="term" value="P:transcription by RNA polymerase I"/>
    <property type="evidence" value="ECO:0000318"/>
    <property type="project" value="GO_Central"/>
</dbReference>
<dbReference type="GO" id="GO:0006366">
    <property type="term" value="P:transcription by RNA polymerase II"/>
    <property type="evidence" value="ECO:0000318"/>
    <property type="project" value="GO_Central"/>
</dbReference>
<dbReference type="GO" id="GO:0042797">
    <property type="term" value="P:tRNA transcription by RNA polymerase III"/>
    <property type="evidence" value="ECO:0000318"/>
    <property type="project" value="GO_Central"/>
</dbReference>
<dbReference type="FunFam" id="3.90.940.10:FF:000005">
    <property type="entry name" value="Probable DNA-directed RNA polymerases I, II, and III subunit RPABC2"/>
    <property type="match status" value="1"/>
</dbReference>
<dbReference type="Gene3D" id="3.90.940.10">
    <property type="match status" value="1"/>
</dbReference>
<dbReference type="HAMAP" id="MF_00192">
    <property type="entry name" value="RNApol_arch_Rpo6"/>
    <property type="match status" value="1"/>
</dbReference>
<dbReference type="InterPro" id="IPR020708">
    <property type="entry name" value="DNA-dir_RNA_polK_14-18kDa_CS"/>
</dbReference>
<dbReference type="InterPro" id="IPR018247">
    <property type="entry name" value="EF_Hand_1_Ca_BS"/>
</dbReference>
<dbReference type="InterPro" id="IPR006110">
    <property type="entry name" value="Pol_omega/Rpo6/RPB6"/>
</dbReference>
<dbReference type="InterPro" id="IPR028363">
    <property type="entry name" value="RPB6"/>
</dbReference>
<dbReference type="InterPro" id="IPR036161">
    <property type="entry name" value="RPB6/omega-like_sf"/>
</dbReference>
<dbReference type="InterPro" id="IPR006111">
    <property type="entry name" value="Rpo6/Rpb6"/>
</dbReference>
<dbReference type="NCBIfam" id="NF002207">
    <property type="entry name" value="PRK01099.1-2"/>
    <property type="match status" value="1"/>
</dbReference>
<dbReference type="NCBIfam" id="NF002208">
    <property type="entry name" value="PRK01099.1-3"/>
    <property type="match status" value="1"/>
</dbReference>
<dbReference type="PANTHER" id="PTHR47227">
    <property type="entry name" value="DNA-DIRECTED RNA POLYMERASE SUBUNIT K"/>
    <property type="match status" value="1"/>
</dbReference>
<dbReference type="PANTHER" id="PTHR47227:SF5">
    <property type="entry name" value="DNA-DIRECTED RNA POLYMERASES I, II, AND III SUBUNIT RPABC2"/>
    <property type="match status" value="1"/>
</dbReference>
<dbReference type="Pfam" id="PF01192">
    <property type="entry name" value="RNA_pol_Rpb6"/>
    <property type="match status" value="1"/>
</dbReference>
<dbReference type="PIRSF" id="PIRSF500154">
    <property type="entry name" value="RPB6"/>
    <property type="match status" value="1"/>
</dbReference>
<dbReference type="PIRSF" id="PIRSF000778">
    <property type="entry name" value="RpoK/RPB6"/>
    <property type="match status" value="1"/>
</dbReference>
<dbReference type="SUPFAM" id="SSF63562">
    <property type="entry name" value="RPB6/omega subunit-like"/>
    <property type="match status" value="1"/>
</dbReference>
<dbReference type="PROSITE" id="PS01111">
    <property type="entry name" value="RNA_POL_K_14KD"/>
    <property type="match status" value="1"/>
</dbReference>
<accession>A8WSV7</accession>
<evidence type="ECO:0000250" key="1"/>
<evidence type="ECO:0000250" key="2">
    <source>
        <dbReference type="UniProtKB" id="Q17684"/>
    </source>
</evidence>
<evidence type="ECO:0000256" key="3">
    <source>
        <dbReference type="SAM" id="MobiDB-lite"/>
    </source>
</evidence>
<evidence type="ECO:0000305" key="4"/>
<evidence type="ECO:0000312" key="5">
    <source>
        <dbReference type="EMBL" id="CAP23566.1"/>
    </source>
</evidence>
<protein>
    <recommendedName>
        <fullName evidence="2">Probable DNA-directed RNA polymerases I, II, and III subunit RPABC2</fullName>
        <shortName evidence="2">RNA polymerases I, II, and III subunit ABC2</shortName>
    </recommendedName>
    <alternativeName>
        <fullName>RPB6 homolog</fullName>
    </alternativeName>
</protein>
<organism>
    <name type="scientific">Caenorhabditis briggsae</name>
    <dbReference type="NCBI Taxonomy" id="6238"/>
    <lineage>
        <taxon>Eukaryota</taxon>
        <taxon>Metazoa</taxon>
        <taxon>Ecdysozoa</taxon>
        <taxon>Nematoda</taxon>
        <taxon>Chromadorea</taxon>
        <taxon>Rhabditida</taxon>
        <taxon>Rhabditina</taxon>
        <taxon>Rhabditomorpha</taxon>
        <taxon>Rhabditoidea</taxon>
        <taxon>Rhabditidae</taxon>
        <taxon>Peloderinae</taxon>
        <taxon>Caenorhabditis</taxon>
    </lineage>
</organism>
<gene>
    <name evidence="5" type="primary">rpb-6</name>
    <name type="ORF">CBG03063</name>
</gene>
<comment type="function">
    <text evidence="1">DNA-dependent RNA polymerases catalyze the transcription of DNA into RNA using the four ribonucleoside triphosphates as substrates. Common component of RNA polymerases I, II and III which synthesize ribosomal RNA precursors, mRNA precursors and many functional non-coding RNAs, and small RNAs, such as 5S rRNA and tRNAs, respectively. Pol II is the central component of the basal RNA polymerase II transcription machinery. Pols are composed of mobile elements that move relative to each other. In Pol II, RPB6 is part of the clamp element and together with parts of RPB1 and RPB2 forms a pocket to which the RPB4-RPB7 subcomplex binds (By similarity).</text>
</comment>
<comment type="subunit">
    <text evidence="2">Component of the RNA polymerase I (Pol I), RNA polymerase II (Pol II) and RNA polymerase III (Pol III) complexes consisting of at least 13, 12 and 17 subunits, respectively.</text>
</comment>
<comment type="subcellular location">
    <subcellularLocation>
        <location evidence="2">Nucleus</location>
    </subcellularLocation>
</comment>
<comment type="similarity">
    <text evidence="4">Belongs to the archaeal Rpo6/eukaryotic RPB6 RNA polymerase subunit family.</text>
</comment>
<feature type="chain" id="PRO_0000352766" description="Probable DNA-directed RNA polymerases I, II, and III subunit RPABC2">
    <location>
        <begin position="1"/>
        <end position="138"/>
    </location>
</feature>
<feature type="region of interest" description="Disordered" evidence="3">
    <location>
        <begin position="1"/>
        <end position="46"/>
    </location>
</feature>
<feature type="compositionally biased region" description="Acidic residues" evidence="3">
    <location>
        <begin position="1"/>
        <end position="27"/>
    </location>
</feature>
<feature type="compositionally biased region" description="Acidic residues" evidence="3">
    <location>
        <begin position="35"/>
        <end position="46"/>
    </location>
</feature>